<name>KLEC2_ECOLX</name>
<dbReference type="EMBL" id="X07248">
    <property type="protein sequence ID" value="CAA30235.1"/>
    <property type="molecule type" value="Genomic_DNA"/>
</dbReference>
<dbReference type="EMBL" id="L18919">
    <property type="protein sequence ID" value="AAA92767.1"/>
    <property type="molecule type" value="Genomic_DNA"/>
</dbReference>
<dbReference type="PIR" id="D53306">
    <property type="entry name" value="D53306"/>
</dbReference>
<dbReference type="SMR" id="P13966"/>
<dbReference type="InterPro" id="IPR035338">
    <property type="entry name" value="KleA/KleC-like"/>
</dbReference>
<dbReference type="Pfam" id="PF17383">
    <property type="entry name" value="kleA_kleC"/>
    <property type="match status" value="1"/>
</dbReference>
<comment type="similarity">
    <text evidence="1">To E.coli KleA (KcrA1).</text>
</comment>
<reference key="1">
    <citation type="journal article" date="1988" name="Nucleic Acids Res.">
        <title>Gene regulation on broad host range plasmid RK2: identification of three novel operons whose transcription is repressed by both KorA and KorC.</title>
        <authorList>
            <person name="Thomas C.M."/>
            <person name="Ibbotson J.P."/>
            <person name="Wang N."/>
            <person name="Smith C.A."/>
            <person name="Tipping R."/>
            <person name="Loader N.M."/>
        </authorList>
    </citation>
    <scope>NUCLEOTIDE SEQUENCE [GENOMIC DNA]</scope>
</reference>
<reference key="2">
    <citation type="journal article" date="1993" name="J. Bacteriol.">
        <title>kil-kor regulon of promiscuous plasmid RK2: structure, products, and regulation of two operons that constitute the kilE locus.</title>
        <authorList>
            <person name="Kornacki J.A."/>
            <person name="Chang C.-H."/>
            <person name="Figurski D.H."/>
        </authorList>
    </citation>
    <scope>NUCLEOTIDE SEQUENCE [GENOMIC DNA]</scope>
</reference>
<keyword id="KW-0614">Plasmid</keyword>
<feature type="chain" id="PRO_0000068369" description="Protein KleC">
    <location>
        <begin position="1"/>
        <end position="76"/>
    </location>
</feature>
<feature type="sequence conflict" description="In Ref. 2; AAA92767." evidence="1" ref="2">
    <original>R</original>
    <variation>H</variation>
    <location>
        <position position="38"/>
    </location>
</feature>
<accession>P13966</accession>
<accession>Q52770</accession>
<evidence type="ECO:0000305" key="1"/>
<sequence>MTDKFMPWIDELPNVDQELVAQRNAIAEKQRRADELMRQVERLRIEVMRESSRLEERAKQRWTFNEIDLAKFRAGH</sequence>
<protein>
    <recommendedName>
        <fullName>Protein KleC</fullName>
    </recommendedName>
    <alternativeName>
        <fullName>KcrB1 protein</fullName>
    </alternativeName>
</protein>
<gene>
    <name type="primary">kleC</name>
    <name type="synonym">kcrB1</name>
</gene>
<geneLocation type="plasmid">
    <name>IncP-alpha RK2</name>
</geneLocation>
<organism>
    <name type="scientific">Escherichia coli</name>
    <dbReference type="NCBI Taxonomy" id="562"/>
    <lineage>
        <taxon>Bacteria</taxon>
        <taxon>Pseudomonadati</taxon>
        <taxon>Pseudomonadota</taxon>
        <taxon>Gammaproteobacteria</taxon>
        <taxon>Enterobacterales</taxon>
        <taxon>Enterobacteriaceae</taxon>
        <taxon>Escherichia</taxon>
    </lineage>
</organism>
<proteinExistence type="predicted"/>